<feature type="chain" id="PRO_0000103436" description="Dihydroxy-acid dehydratase 3">
    <location>
        <begin position="1"/>
        <end position="561"/>
    </location>
</feature>
<feature type="active site" description="Proton acceptor" evidence="1">
    <location>
        <position position="473"/>
    </location>
</feature>
<feature type="binding site" evidence="1">
    <location>
        <position position="50"/>
    </location>
    <ligand>
        <name>[2Fe-2S] cluster</name>
        <dbReference type="ChEBI" id="CHEBI:190135"/>
    </ligand>
</feature>
<feature type="binding site" evidence="1">
    <location>
        <position position="82"/>
    </location>
    <ligand>
        <name>Mg(2+)</name>
        <dbReference type="ChEBI" id="CHEBI:18420"/>
    </ligand>
</feature>
<feature type="binding site" evidence="1">
    <location>
        <position position="123"/>
    </location>
    <ligand>
        <name>[2Fe-2S] cluster</name>
        <dbReference type="ChEBI" id="CHEBI:190135"/>
    </ligand>
</feature>
<feature type="binding site" evidence="1">
    <location>
        <position position="124"/>
    </location>
    <ligand>
        <name>Mg(2+)</name>
        <dbReference type="ChEBI" id="CHEBI:18420"/>
    </ligand>
</feature>
<feature type="binding site" description="via carbamate group" evidence="1">
    <location>
        <position position="125"/>
    </location>
    <ligand>
        <name>Mg(2+)</name>
        <dbReference type="ChEBI" id="CHEBI:18420"/>
    </ligand>
</feature>
<feature type="binding site" evidence="1">
    <location>
        <position position="195"/>
    </location>
    <ligand>
        <name>[2Fe-2S] cluster</name>
        <dbReference type="ChEBI" id="CHEBI:190135"/>
    </ligand>
</feature>
<feature type="binding site" evidence="1">
    <location>
        <position position="447"/>
    </location>
    <ligand>
        <name>Mg(2+)</name>
        <dbReference type="ChEBI" id="CHEBI:18420"/>
    </ligand>
</feature>
<feature type="modified residue" description="N6-carboxylysine" evidence="1">
    <location>
        <position position="125"/>
    </location>
</feature>
<organism>
    <name type="scientific">Bordetella bronchiseptica (strain ATCC BAA-588 / NCTC 13252 / RB50)</name>
    <name type="common">Alcaligenes bronchisepticus</name>
    <dbReference type="NCBI Taxonomy" id="257310"/>
    <lineage>
        <taxon>Bacteria</taxon>
        <taxon>Pseudomonadati</taxon>
        <taxon>Pseudomonadota</taxon>
        <taxon>Betaproteobacteria</taxon>
        <taxon>Burkholderiales</taxon>
        <taxon>Alcaligenaceae</taxon>
        <taxon>Bordetella</taxon>
    </lineage>
</organism>
<gene>
    <name evidence="1" type="primary">ilvD3</name>
    <name type="ordered locus">BB4216</name>
</gene>
<reference key="1">
    <citation type="journal article" date="2003" name="Nat. Genet.">
        <title>Comparative analysis of the genome sequences of Bordetella pertussis, Bordetella parapertussis and Bordetella bronchiseptica.</title>
        <authorList>
            <person name="Parkhill J."/>
            <person name="Sebaihia M."/>
            <person name="Preston A."/>
            <person name="Murphy L.D."/>
            <person name="Thomson N.R."/>
            <person name="Harris D.E."/>
            <person name="Holden M.T.G."/>
            <person name="Churcher C.M."/>
            <person name="Bentley S.D."/>
            <person name="Mungall K.L."/>
            <person name="Cerdeno-Tarraga A.-M."/>
            <person name="Temple L."/>
            <person name="James K.D."/>
            <person name="Harris B."/>
            <person name="Quail M.A."/>
            <person name="Achtman M."/>
            <person name="Atkin R."/>
            <person name="Baker S."/>
            <person name="Basham D."/>
            <person name="Bason N."/>
            <person name="Cherevach I."/>
            <person name="Chillingworth T."/>
            <person name="Collins M."/>
            <person name="Cronin A."/>
            <person name="Davis P."/>
            <person name="Doggett J."/>
            <person name="Feltwell T."/>
            <person name="Goble A."/>
            <person name="Hamlin N."/>
            <person name="Hauser H."/>
            <person name="Holroyd S."/>
            <person name="Jagels K."/>
            <person name="Leather S."/>
            <person name="Moule S."/>
            <person name="Norberczak H."/>
            <person name="O'Neil S."/>
            <person name="Ormond D."/>
            <person name="Price C."/>
            <person name="Rabbinowitsch E."/>
            <person name="Rutter S."/>
            <person name="Sanders M."/>
            <person name="Saunders D."/>
            <person name="Seeger K."/>
            <person name="Sharp S."/>
            <person name="Simmonds M."/>
            <person name="Skelton J."/>
            <person name="Squares R."/>
            <person name="Squares S."/>
            <person name="Stevens K."/>
            <person name="Unwin L."/>
            <person name="Whitehead S."/>
            <person name="Barrell B.G."/>
            <person name="Maskell D.J."/>
        </authorList>
    </citation>
    <scope>NUCLEOTIDE SEQUENCE [LARGE SCALE GENOMIC DNA]</scope>
    <source>
        <strain>ATCC BAA-588 / NCTC 13252 / RB50</strain>
    </source>
</reference>
<keyword id="KW-0001">2Fe-2S</keyword>
<keyword id="KW-0028">Amino-acid biosynthesis</keyword>
<keyword id="KW-0100">Branched-chain amino acid biosynthesis</keyword>
<keyword id="KW-0408">Iron</keyword>
<keyword id="KW-0411">Iron-sulfur</keyword>
<keyword id="KW-0456">Lyase</keyword>
<keyword id="KW-0460">Magnesium</keyword>
<keyword id="KW-0479">Metal-binding</keyword>
<accession>Q7WFQ5</accession>
<comment type="function">
    <text evidence="1">Functions in the biosynthesis of branched-chain amino acids. Catalyzes the dehydration of (2R,3R)-2,3-dihydroxy-3-methylpentanoate (2,3-dihydroxy-3-methylvalerate) into 2-oxo-3-methylpentanoate (2-oxo-3-methylvalerate) and of (2R)-2,3-dihydroxy-3-methylbutanoate (2,3-dihydroxyisovalerate) into 2-oxo-3-methylbutanoate (2-oxoisovalerate), the penultimate precursor to L-isoleucine and L-valine, respectively.</text>
</comment>
<comment type="catalytic activity">
    <reaction evidence="1">
        <text>(2R)-2,3-dihydroxy-3-methylbutanoate = 3-methyl-2-oxobutanoate + H2O</text>
        <dbReference type="Rhea" id="RHEA:24809"/>
        <dbReference type="ChEBI" id="CHEBI:11851"/>
        <dbReference type="ChEBI" id="CHEBI:15377"/>
        <dbReference type="ChEBI" id="CHEBI:49072"/>
        <dbReference type="EC" id="4.2.1.9"/>
    </reaction>
    <physiologicalReaction direction="left-to-right" evidence="1">
        <dbReference type="Rhea" id="RHEA:24810"/>
    </physiologicalReaction>
</comment>
<comment type="catalytic activity">
    <reaction evidence="1">
        <text>(2R,3R)-2,3-dihydroxy-3-methylpentanoate = (S)-3-methyl-2-oxopentanoate + H2O</text>
        <dbReference type="Rhea" id="RHEA:27694"/>
        <dbReference type="ChEBI" id="CHEBI:15377"/>
        <dbReference type="ChEBI" id="CHEBI:35146"/>
        <dbReference type="ChEBI" id="CHEBI:49258"/>
        <dbReference type="EC" id="4.2.1.9"/>
    </reaction>
    <physiologicalReaction direction="left-to-right" evidence="1">
        <dbReference type="Rhea" id="RHEA:27695"/>
    </physiologicalReaction>
</comment>
<comment type="cofactor">
    <cofactor evidence="1">
        <name>[2Fe-2S] cluster</name>
        <dbReference type="ChEBI" id="CHEBI:190135"/>
    </cofactor>
    <text evidence="1">Binds 1 [2Fe-2S] cluster per subunit. This cluster acts as a Lewis acid cofactor.</text>
</comment>
<comment type="cofactor">
    <cofactor evidence="1">
        <name>Mg(2+)</name>
        <dbReference type="ChEBI" id="CHEBI:18420"/>
    </cofactor>
</comment>
<comment type="pathway">
    <text evidence="1">Amino-acid biosynthesis; L-isoleucine biosynthesis; L-isoleucine from 2-oxobutanoate: step 3/4.</text>
</comment>
<comment type="pathway">
    <text evidence="1">Amino-acid biosynthesis; L-valine biosynthesis; L-valine from pyruvate: step 3/4.</text>
</comment>
<comment type="subunit">
    <text evidence="1">Homodimer.</text>
</comment>
<comment type="similarity">
    <text evidence="1">Belongs to the IlvD/Edd family.</text>
</comment>
<proteinExistence type="inferred from homology"/>
<name>ILVD3_BORBR</name>
<protein>
    <recommendedName>
        <fullName evidence="1">Dihydroxy-acid dehydratase 3</fullName>
        <shortName evidence="1">DAD 3</shortName>
        <ecNumber evidence="1">4.2.1.9</ecNumber>
    </recommendedName>
</protein>
<dbReference type="EC" id="4.2.1.9" evidence="1"/>
<dbReference type="EMBL" id="BX640449">
    <property type="protein sequence ID" value="CAE34580.1"/>
    <property type="molecule type" value="Genomic_DNA"/>
</dbReference>
<dbReference type="SMR" id="Q7WFQ5"/>
<dbReference type="KEGG" id="bbr:BB4216"/>
<dbReference type="eggNOG" id="COG0129">
    <property type="taxonomic scope" value="Bacteria"/>
</dbReference>
<dbReference type="HOGENOM" id="CLU_014271_4_2_4"/>
<dbReference type="UniPathway" id="UPA00047">
    <property type="reaction ID" value="UER00057"/>
</dbReference>
<dbReference type="UniPathway" id="UPA00049">
    <property type="reaction ID" value="UER00061"/>
</dbReference>
<dbReference type="Proteomes" id="UP000001027">
    <property type="component" value="Chromosome"/>
</dbReference>
<dbReference type="GO" id="GO:0051537">
    <property type="term" value="F:2 iron, 2 sulfur cluster binding"/>
    <property type="evidence" value="ECO:0007669"/>
    <property type="project" value="UniProtKB-UniRule"/>
</dbReference>
<dbReference type="GO" id="GO:0004160">
    <property type="term" value="F:dihydroxy-acid dehydratase activity"/>
    <property type="evidence" value="ECO:0007669"/>
    <property type="project" value="UniProtKB-UniRule"/>
</dbReference>
<dbReference type="GO" id="GO:0000287">
    <property type="term" value="F:magnesium ion binding"/>
    <property type="evidence" value="ECO:0007669"/>
    <property type="project" value="UniProtKB-UniRule"/>
</dbReference>
<dbReference type="GO" id="GO:0009097">
    <property type="term" value="P:isoleucine biosynthetic process"/>
    <property type="evidence" value="ECO:0007669"/>
    <property type="project" value="UniProtKB-UniRule"/>
</dbReference>
<dbReference type="GO" id="GO:0009099">
    <property type="term" value="P:L-valine biosynthetic process"/>
    <property type="evidence" value="ECO:0007669"/>
    <property type="project" value="UniProtKB-UniRule"/>
</dbReference>
<dbReference type="FunFam" id="3.50.30.80:FF:000001">
    <property type="entry name" value="Dihydroxy-acid dehydratase"/>
    <property type="match status" value="1"/>
</dbReference>
<dbReference type="Gene3D" id="3.50.30.80">
    <property type="entry name" value="IlvD/EDD C-terminal domain-like"/>
    <property type="match status" value="1"/>
</dbReference>
<dbReference type="HAMAP" id="MF_00012">
    <property type="entry name" value="IlvD"/>
    <property type="match status" value="1"/>
</dbReference>
<dbReference type="InterPro" id="IPR050165">
    <property type="entry name" value="DHAD_IlvD/Edd"/>
</dbReference>
<dbReference type="InterPro" id="IPR042096">
    <property type="entry name" value="Dihydro-acid_dehy_C"/>
</dbReference>
<dbReference type="InterPro" id="IPR004404">
    <property type="entry name" value="DihydroxyA_deHydtase"/>
</dbReference>
<dbReference type="InterPro" id="IPR020558">
    <property type="entry name" value="DiOHA_6PGluconate_deHydtase_CS"/>
</dbReference>
<dbReference type="InterPro" id="IPR056740">
    <property type="entry name" value="ILV_EDD_C"/>
</dbReference>
<dbReference type="InterPro" id="IPR000581">
    <property type="entry name" value="ILV_EDD_N"/>
</dbReference>
<dbReference type="InterPro" id="IPR037237">
    <property type="entry name" value="IlvD/EDD_N"/>
</dbReference>
<dbReference type="NCBIfam" id="TIGR00110">
    <property type="entry name" value="ilvD"/>
    <property type="match status" value="1"/>
</dbReference>
<dbReference type="NCBIfam" id="NF002068">
    <property type="entry name" value="PRK00911.1"/>
    <property type="match status" value="1"/>
</dbReference>
<dbReference type="PANTHER" id="PTHR21000">
    <property type="entry name" value="DIHYDROXY-ACID DEHYDRATASE DAD"/>
    <property type="match status" value="1"/>
</dbReference>
<dbReference type="PANTHER" id="PTHR21000:SF5">
    <property type="entry name" value="DIHYDROXY-ACID DEHYDRATASE, MITOCHONDRIAL"/>
    <property type="match status" value="1"/>
</dbReference>
<dbReference type="Pfam" id="PF24877">
    <property type="entry name" value="ILV_EDD_C"/>
    <property type="match status" value="1"/>
</dbReference>
<dbReference type="Pfam" id="PF00920">
    <property type="entry name" value="ILVD_EDD_N"/>
    <property type="match status" value="1"/>
</dbReference>
<dbReference type="SUPFAM" id="SSF143975">
    <property type="entry name" value="IlvD/EDD N-terminal domain-like"/>
    <property type="match status" value="1"/>
</dbReference>
<dbReference type="SUPFAM" id="SSF52016">
    <property type="entry name" value="LeuD/IlvD-like"/>
    <property type="match status" value="1"/>
</dbReference>
<dbReference type="PROSITE" id="PS00886">
    <property type="entry name" value="ILVD_EDD_1"/>
    <property type="match status" value="1"/>
</dbReference>
<dbReference type="PROSITE" id="PS00887">
    <property type="entry name" value="ILVD_EDD_2"/>
    <property type="match status" value="1"/>
</dbReference>
<evidence type="ECO:0000255" key="1">
    <source>
        <dbReference type="HAMAP-Rule" id="MF_00012"/>
    </source>
</evidence>
<sequence length="561" mass="59657">MSDNNRSRHITEGVARAPNRAMYYALGYTEADFQNPMIGVANGHSTITPCNSGLQRLADAAIEAIRVSRANPQVFGTPTISDGMSMGTEGMKYSLVSREVIADCIETAAQGQWMDGVVVIGGCDKNMPGGMMALARMNVPGIYVYGGTIKPGHYKGKDLTIVSVFEAVGEYTMGRMDETDFKAIEQCAIPGSGSCGGMYTANTMSSAFEAMGMSLPHSSTMANEDQEKVASAAESARVLVEAVRRQLRPRDIITRASIENAVAVIMATGGSTNAVLHFLAIAHAAEVPWNIDDFERIRKRVPVICDLKPSGKYVATDLHRAGGIPQVMKILLNAGLLHGDCITITGKTVAETLANVPDAPPPGQDVIMPIERALYPQGHLAILKGNLSPEGCVAKITGLKNPVITGPARVFDSEDDAMSAIMDRRIRDGDVVVIRYEGPKGGPGMREMLAPTSALVGQGLGETVGLITDGRFSGGTWGMVVGHVAPEAFVGGPIALIREGDSVTIDAHQLLLQLNISDEEMAARRKAWAQPKPRYVRGVLAKFGKLACTASRGAVTDAFEE</sequence>